<reference key="1">
    <citation type="journal article" date="2005" name="J. Bacteriol.">
        <title>Insights on evolution of virulence and resistance from the complete genome analysis of an early methicillin-resistant Staphylococcus aureus strain and a biofilm-producing methicillin-resistant Staphylococcus epidermidis strain.</title>
        <authorList>
            <person name="Gill S.R."/>
            <person name="Fouts D.E."/>
            <person name="Archer G.L."/>
            <person name="Mongodin E.F."/>
            <person name="DeBoy R.T."/>
            <person name="Ravel J."/>
            <person name="Paulsen I.T."/>
            <person name="Kolonay J.F."/>
            <person name="Brinkac L.M."/>
            <person name="Beanan M.J."/>
            <person name="Dodson R.J."/>
            <person name="Daugherty S.C."/>
            <person name="Madupu R."/>
            <person name="Angiuoli S.V."/>
            <person name="Durkin A.S."/>
            <person name="Haft D.H."/>
            <person name="Vamathevan J.J."/>
            <person name="Khouri H."/>
            <person name="Utterback T.R."/>
            <person name="Lee C."/>
            <person name="Dimitrov G."/>
            <person name="Jiang L."/>
            <person name="Qin H."/>
            <person name="Weidman J."/>
            <person name="Tran K."/>
            <person name="Kang K.H."/>
            <person name="Hance I.R."/>
            <person name="Nelson K.E."/>
            <person name="Fraser C.M."/>
        </authorList>
    </citation>
    <scope>NUCLEOTIDE SEQUENCE [LARGE SCALE GENOMIC DNA]</scope>
    <source>
        <strain>COL</strain>
    </source>
</reference>
<reference key="2">
    <citation type="journal article" date="2007" name="J. Bacteriol.">
        <title>Anaerobic gene expression in Staphylococcus aureus.</title>
        <authorList>
            <person name="Fuchs S."/>
            <person name="Pane-Farre J."/>
            <person name="Kohler C."/>
            <person name="Hecker M."/>
            <person name="Engelmann S."/>
        </authorList>
    </citation>
    <scope>INDUCTION DURING ANAEROBIC GROWTH</scope>
</reference>
<feature type="chain" id="PRO_0000284455" description="HTH-type transcriptional regulator SarZ">
    <location>
        <begin position="1"/>
        <end position="148"/>
    </location>
</feature>
<feature type="domain" description="HTH marR-type" evidence="2">
    <location>
        <begin position="9"/>
        <end position="139"/>
    </location>
</feature>
<feature type="DNA-binding region" description="H-T-H motif" evidence="2">
    <location>
        <begin position="55"/>
        <end position="78"/>
    </location>
</feature>
<comment type="function">
    <text evidence="1">Activates transcription of virulence factors alpha- and beta hemolysin genes (hla and hlb). Also, activates RNAIII expression, a central regulator transcribed from the agr locus (By similarity).</text>
</comment>
<comment type="subcellular location">
    <subcellularLocation>
        <location evidence="1">Cytoplasm</location>
    </subcellularLocation>
</comment>
<comment type="induction">
    <text evidence="1 3">Transcriptionally activated by CvfA (By similarity). Up-regulated during anaerobic growth.</text>
</comment>
<comment type="similarity">
    <text evidence="4">Belongs to the SarZ family.</text>
</comment>
<protein>
    <recommendedName>
        <fullName>HTH-type transcriptional regulator SarZ</fullName>
    </recommendedName>
    <alternativeName>
        <fullName>Staphylococcal accessory regulator Z</fullName>
    </alternativeName>
</protein>
<proteinExistence type="evidence at transcript level"/>
<evidence type="ECO:0000250" key="1"/>
<evidence type="ECO:0000255" key="2">
    <source>
        <dbReference type="PROSITE-ProRule" id="PRU00345"/>
    </source>
</evidence>
<evidence type="ECO:0000269" key="3">
    <source>
    </source>
</evidence>
<evidence type="ECO:0000305" key="4"/>
<organism>
    <name type="scientific">Staphylococcus aureus (strain COL)</name>
    <dbReference type="NCBI Taxonomy" id="93062"/>
    <lineage>
        <taxon>Bacteria</taxon>
        <taxon>Bacillati</taxon>
        <taxon>Bacillota</taxon>
        <taxon>Bacilli</taxon>
        <taxon>Bacillales</taxon>
        <taxon>Staphylococcaceae</taxon>
        <taxon>Staphylococcus</taxon>
    </lineage>
</organism>
<accession>Q5HDG9</accession>
<sequence length="148" mass="17435">MYVENSYLSKQLCFLFYVSSKEIIKKYTNYLKEYDLTYTGYIVLMAIENDEKLNIKKLGERVFLDSGTLTPLLKKLEKKDYVVRTREEKDERNLQISLTEQGKAIKSPLAEISVKVFNEFNISEREASDIINNLRNFVSKNFDYSDKK</sequence>
<name>SARZ_STAAC</name>
<dbReference type="EMBL" id="CP000046">
    <property type="protein sequence ID" value="AAW37210.1"/>
    <property type="molecule type" value="Genomic_DNA"/>
</dbReference>
<dbReference type="RefSeq" id="WP_000289213.1">
    <property type="nucleotide sequence ID" value="NZ_JBGOFO010000004.1"/>
</dbReference>
<dbReference type="SMR" id="Q5HDG9"/>
<dbReference type="KEGG" id="sac:SACOL2384"/>
<dbReference type="HOGENOM" id="CLU_083287_3_2_9"/>
<dbReference type="Proteomes" id="UP000000530">
    <property type="component" value="Chromosome"/>
</dbReference>
<dbReference type="GO" id="GO:0005737">
    <property type="term" value="C:cytoplasm"/>
    <property type="evidence" value="ECO:0007669"/>
    <property type="project" value="UniProtKB-SubCell"/>
</dbReference>
<dbReference type="GO" id="GO:0003677">
    <property type="term" value="F:DNA binding"/>
    <property type="evidence" value="ECO:0007669"/>
    <property type="project" value="UniProtKB-KW"/>
</dbReference>
<dbReference type="GO" id="GO:0003700">
    <property type="term" value="F:DNA-binding transcription factor activity"/>
    <property type="evidence" value="ECO:0007669"/>
    <property type="project" value="InterPro"/>
</dbReference>
<dbReference type="FunFam" id="1.10.10.10:FF:000163">
    <property type="entry name" value="MarR family transcriptional regulator"/>
    <property type="match status" value="1"/>
</dbReference>
<dbReference type="Gene3D" id="1.10.10.10">
    <property type="entry name" value="Winged helix-like DNA-binding domain superfamily/Winged helix DNA-binding domain"/>
    <property type="match status" value="1"/>
</dbReference>
<dbReference type="InterPro" id="IPR000835">
    <property type="entry name" value="HTH_MarR-typ"/>
</dbReference>
<dbReference type="InterPro" id="IPR055166">
    <property type="entry name" value="Transc_reg_Sar_Rot_HTH"/>
</dbReference>
<dbReference type="InterPro" id="IPR036388">
    <property type="entry name" value="WH-like_DNA-bd_sf"/>
</dbReference>
<dbReference type="InterPro" id="IPR036390">
    <property type="entry name" value="WH_DNA-bd_sf"/>
</dbReference>
<dbReference type="PANTHER" id="PTHR42756">
    <property type="entry name" value="TRANSCRIPTIONAL REGULATOR, MARR"/>
    <property type="match status" value="1"/>
</dbReference>
<dbReference type="PANTHER" id="PTHR42756:SF1">
    <property type="entry name" value="TRANSCRIPTIONAL REPRESSOR OF EMRAB OPERON"/>
    <property type="match status" value="1"/>
</dbReference>
<dbReference type="Pfam" id="PF22381">
    <property type="entry name" value="Staph_reg_Sar_Rot"/>
    <property type="match status" value="1"/>
</dbReference>
<dbReference type="PRINTS" id="PR00598">
    <property type="entry name" value="HTHMARR"/>
</dbReference>
<dbReference type="SMART" id="SM00347">
    <property type="entry name" value="HTH_MARR"/>
    <property type="match status" value="1"/>
</dbReference>
<dbReference type="SUPFAM" id="SSF46785">
    <property type="entry name" value="Winged helix' DNA-binding domain"/>
    <property type="match status" value="1"/>
</dbReference>
<dbReference type="PROSITE" id="PS50995">
    <property type="entry name" value="HTH_MARR_2"/>
    <property type="match status" value="1"/>
</dbReference>
<keyword id="KW-0010">Activator</keyword>
<keyword id="KW-0963">Cytoplasm</keyword>
<keyword id="KW-0238">DNA-binding</keyword>
<keyword id="KW-0804">Transcription</keyword>
<keyword id="KW-0805">Transcription regulation</keyword>
<keyword id="KW-0843">Virulence</keyword>
<gene>
    <name type="primary">sarZ</name>
    <name type="ordered locus">SACOL2384</name>
</gene>